<name>SYC_CORGB</name>
<evidence type="ECO:0000255" key="1">
    <source>
        <dbReference type="HAMAP-Rule" id="MF_00041"/>
    </source>
</evidence>
<accession>A4QH41</accession>
<feature type="chain" id="PRO_1000006583" description="Cysteine--tRNA ligase">
    <location>
        <begin position="1"/>
        <end position="460"/>
    </location>
</feature>
<feature type="short sequence motif" description="'HIGH' region">
    <location>
        <begin position="31"/>
        <end position="41"/>
    </location>
</feature>
<feature type="short sequence motif" description="'KMSKS' region">
    <location>
        <begin position="268"/>
        <end position="272"/>
    </location>
</feature>
<feature type="binding site" evidence="1">
    <location>
        <position position="29"/>
    </location>
    <ligand>
        <name>Zn(2+)</name>
        <dbReference type="ChEBI" id="CHEBI:29105"/>
    </ligand>
</feature>
<feature type="binding site" evidence="1">
    <location>
        <position position="212"/>
    </location>
    <ligand>
        <name>Zn(2+)</name>
        <dbReference type="ChEBI" id="CHEBI:29105"/>
    </ligand>
</feature>
<feature type="binding site" evidence="1">
    <location>
        <position position="237"/>
    </location>
    <ligand>
        <name>Zn(2+)</name>
        <dbReference type="ChEBI" id="CHEBI:29105"/>
    </ligand>
</feature>
<feature type="binding site" evidence="1">
    <location>
        <position position="241"/>
    </location>
    <ligand>
        <name>Zn(2+)</name>
        <dbReference type="ChEBI" id="CHEBI:29105"/>
    </ligand>
</feature>
<feature type="binding site" evidence="1">
    <location>
        <position position="271"/>
    </location>
    <ligand>
        <name>ATP</name>
        <dbReference type="ChEBI" id="CHEBI:30616"/>
    </ligand>
</feature>
<gene>
    <name evidence="1" type="primary">cysS</name>
    <name type="ordered locus">cgR_2546</name>
</gene>
<sequence length="460" mass="51049">MTLRIFDTGTRTLRDFKPVQPGHASVYLCGATPQSSPHIGHVRSAVAFDILRRWLMAKGLDVAFVRNVTDIDDKILTKASENGRPWWEWVSTYEREFTWTYNTLGVLPPSTEPRATGHVTQMIEYMQRLIDNGFAYAVDGSVYFDVAAWSKAEGSDYGSLSGNRVEDMEQGEPDNFGKRGPQDFALWKAAKPGEPSWPTPWGDGRPGWHLECSAMATYYLGEQFDIHCGGLDLQFPHHENEIAQAHAAGDKFANYWMHNHWVTMAGEKMSKSLGNVLAVPEMLKQVRPVELRYYLGSAHYRSVLEYSESALSEAAVGYRRIESFLERVGDVEVGEWTPGFEAAMDEDIAVPKALAEIHNAVREGNAALDKGDREAAKKLASSVRAMTGVLGFDPVEWGSDAGADGKADKALDVLISSELERRATARAEKNWTVADEVRDRLADAGIEVVDTADGATWKLQ</sequence>
<reference key="1">
    <citation type="journal article" date="2007" name="Microbiology">
        <title>Comparative analysis of the Corynebacterium glutamicum group and complete genome sequence of strain R.</title>
        <authorList>
            <person name="Yukawa H."/>
            <person name="Omumasaba C.A."/>
            <person name="Nonaka H."/>
            <person name="Kos P."/>
            <person name="Okai N."/>
            <person name="Suzuki N."/>
            <person name="Suda M."/>
            <person name="Tsuge Y."/>
            <person name="Watanabe J."/>
            <person name="Ikeda Y."/>
            <person name="Vertes A.A."/>
            <person name="Inui M."/>
        </authorList>
    </citation>
    <scope>NUCLEOTIDE SEQUENCE [LARGE SCALE GENOMIC DNA]</scope>
    <source>
        <strain>R</strain>
    </source>
</reference>
<dbReference type="EC" id="6.1.1.16" evidence="1"/>
<dbReference type="EMBL" id="AP009044">
    <property type="protein sequence ID" value="BAF55557.1"/>
    <property type="molecule type" value="Genomic_DNA"/>
</dbReference>
<dbReference type="RefSeq" id="WP_011897875.1">
    <property type="nucleotide sequence ID" value="NC_009342.1"/>
</dbReference>
<dbReference type="SMR" id="A4QH41"/>
<dbReference type="KEGG" id="cgt:cgR_2546"/>
<dbReference type="HOGENOM" id="CLU_013528_0_1_11"/>
<dbReference type="PhylomeDB" id="A4QH41"/>
<dbReference type="Proteomes" id="UP000006698">
    <property type="component" value="Chromosome"/>
</dbReference>
<dbReference type="GO" id="GO:0005829">
    <property type="term" value="C:cytosol"/>
    <property type="evidence" value="ECO:0007669"/>
    <property type="project" value="TreeGrafter"/>
</dbReference>
<dbReference type="GO" id="GO:0005524">
    <property type="term" value="F:ATP binding"/>
    <property type="evidence" value="ECO:0007669"/>
    <property type="project" value="UniProtKB-UniRule"/>
</dbReference>
<dbReference type="GO" id="GO:0004817">
    <property type="term" value="F:cysteine-tRNA ligase activity"/>
    <property type="evidence" value="ECO:0007669"/>
    <property type="project" value="UniProtKB-UniRule"/>
</dbReference>
<dbReference type="GO" id="GO:0008270">
    <property type="term" value="F:zinc ion binding"/>
    <property type="evidence" value="ECO:0007669"/>
    <property type="project" value="UniProtKB-UniRule"/>
</dbReference>
<dbReference type="GO" id="GO:0006423">
    <property type="term" value="P:cysteinyl-tRNA aminoacylation"/>
    <property type="evidence" value="ECO:0007669"/>
    <property type="project" value="UniProtKB-UniRule"/>
</dbReference>
<dbReference type="CDD" id="cd00672">
    <property type="entry name" value="CysRS_core"/>
    <property type="match status" value="1"/>
</dbReference>
<dbReference type="FunFam" id="3.40.50.620:FF:000068">
    <property type="entry name" value="Cysteine--tRNA ligase"/>
    <property type="match status" value="1"/>
</dbReference>
<dbReference type="Gene3D" id="1.20.120.1910">
    <property type="entry name" value="Cysteine-tRNA ligase, C-terminal anti-codon recognition domain"/>
    <property type="match status" value="1"/>
</dbReference>
<dbReference type="Gene3D" id="3.40.50.620">
    <property type="entry name" value="HUPs"/>
    <property type="match status" value="1"/>
</dbReference>
<dbReference type="HAMAP" id="MF_00041">
    <property type="entry name" value="Cys_tRNA_synth"/>
    <property type="match status" value="1"/>
</dbReference>
<dbReference type="InterPro" id="IPR015803">
    <property type="entry name" value="Cys-tRNA-ligase"/>
</dbReference>
<dbReference type="InterPro" id="IPR015273">
    <property type="entry name" value="Cys-tRNA-synt_Ia_DALR"/>
</dbReference>
<dbReference type="InterPro" id="IPR024909">
    <property type="entry name" value="Cys-tRNA/MSH_ligase"/>
</dbReference>
<dbReference type="InterPro" id="IPR014729">
    <property type="entry name" value="Rossmann-like_a/b/a_fold"/>
</dbReference>
<dbReference type="InterPro" id="IPR032678">
    <property type="entry name" value="tRNA-synt_1_cat_dom"/>
</dbReference>
<dbReference type="InterPro" id="IPR009080">
    <property type="entry name" value="tRNAsynth_Ia_anticodon-bd"/>
</dbReference>
<dbReference type="NCBIfam" id="TIGR00435">
    <property type="entry name" value="cysS"/>
    <property type="match status" value="1"/>
</dbReference>
<dbReference type="PANTHER" id="PTHR10890:SF30">
    <property type="entry name" value="CYSTEINE--TRNA LIGASE"/>
    <property type="match status" value="1"/>
</dbReference>
<dbReference type="PANTHER" id="PTHR10890">
    <property type="entry name" value="CYSTEINYL-TRNA SYNTHETASE"/>
    <property type="match status" value="1"/>
</dbReference>
<dbReference type="Pfam" id="PF09190">
    <property type="entry name" value="DALR_2"/>
    <property type="match status" value="1"/>
</dbReference>
<dbReference type="Pfam" id="PF01406">
    <property type="entry name" value="tRNA-synt_1e"/>
    <property type="match status" value="1"/>
</dbReference>
<dbReference type="PRINTS" id="PR00983">
    <property type="entry name" value="TRNASYNTHCYS"/>
</dbReference>
<dbReference type="SMART" id="SM00840">
    <property type="entry name" value="DALR_2"/>
    <property type="match status" value="1"/>
</dbReference>
<dbReference type="SUPFAM" id="SSF47323">
    <property type="entry name" value="Anticodon-binding domain of a subclass of class I aminoacyl-tRNA synthetases"/>
    <property type="match status" value="1"/>
</dbReference>
<dbReference type="SUPFAM" id="SSF52374">
    <property type="entry name" value="Nucleotidylyl transferase"/>
    <property type="match status" value="1"/>
</dbReference>
<proteinExistence type="inferred from homology"/>
<comment type="catalytic activity">
    <reaction evidence="1">
        <text>tRNA(Cys) + L-cysteine + ATP = L-cysteinyl-tRNA(Cys) + AMP + diphosphate</text>
        <dbReference type="Rhea" id="RHEA:17773"/>
        <dbReference type="Rhea" id="RHEA-COMP:9661"/>
        <dbReference type="Rhea" id="RHEA-COMP:9679"/>
        <dbReference type="ChEBI" id="CHEBI:30616"/>
        <dbReference type="ChEBI" id="CHEBI:33019"/>
        <dbReference type="ChEBI" id="CHEBI:35235"/>
        <dbReference type="ChEBI" id="CHEBI:78442"/>
        <dbReference type="ChEBI" id="CHEBI:78517"/>
        <dbReference type="ChEBI" id="CHEBI:456215"/>
        <dbReference type="EC" id="6.1.1.16"/>
    </reaction>
</comment>
<comment type="cofactor">
    <cofactor evidence="1">
        <name>Zn(2+)</name>
        <dbReference type="ChEBI" id="CHEBI:29105"/>
    </cofactor>
    <text evidence="1">Binds 1 zinc ion per subunit.</text>
</comment>
<comment type="subunit">
    <text evidence="1">Monomer.</text>
</comment>
<comment type="subcellular location">
    <subcellularLocation>
        <location evidence="1">Cytoplasm</location>
    </subcellularLocation>
</comment>
<comment type="similarity">
    <text evidence="1">Belongs to the class-I aminoacyl-tRNA synthetase family.</text>
</comment>
<organism>
    <name type="scientific">Corynebacterium glutamicum (strain R)</name>
    <dbReference type="NCBI Taxonomy" id="340322"/>
    <lineage>
        <taxon>Bacteria</taxon>
        <taxon>Bacillati</taxon>
        <taxon>Actinomycetota</taxon>
        <taxon>Actinomycetes</taxon>
        <taxon>Mycobacteriales</taxon>
        <taxon>Corynebacteriaceae</taxon>
        <taxon>Corynebacterium</taxon>
    </lineage>
</organism>
<keyword id="KW-0030">Aminoacyl-tRNA synthetase</keyword>
<keyword id="KW-0067">ATP-binding</keyword>
<keyword id="KW-0963">Cytoplasm</keyword>
<keyword id="KW-0436">Ligase</keyword>
<keyword id="KW-0479">Metal-binding</keyword>
<keyword id="KW-0547">Nucleotide-binding</keyword>
<keyword id="KW-0648">Protein biosynthesis</keyword>
<keyword id="KW-0862">Zinc</keyword>
<protein>
    <recommendedName>
        <fullName evidence="1">Cysteine--tRNA ligase</fullName>
        <ecNumber evidence="1">6.1.1.16</ecNumber>
    </recommendedName>
    <alternativeName>
        <fullName evidence="1">Cysteinyl-tRNA synthetase</fullName>
        <shortName evidence="1">CysRS</shortName>
    </alternativeName>
</protein>